<proteinExistence type="inferred from homology"/>
<comment type="function">
    <text evidence="1">Facilitates the functional incorporation of the urease nickel metallocenter. This process requires GTP hydrolysis, probably effectuated by UreG.</text>
</comment>
<comment type="subunit">
    <text evidence="1">Homodimer. UreD, UreF and UreG form a complex that acts as a GTP-hydrolysis-dependent molecular chaperone, activating the urease apoprotein by helping to assemble the nickel containing metallocenter of UreC. The UreE protein probably delivers the nickel.</text>
</comment>
<comment type="subcellular location">
    <subcellularLocation>
        <location evidence="1">Cytoplasm</location>
    </subcellularLocation>
</comment>
<comment type="similarity">
    <text evidence="1">Belongs to the SIMIBI class G3E GTPase family. UreG subfamily.</text>
</comment>
<name>UREG_HAEIN</name>
<sequence>MSNTVATMINKRNIMRNYIKIGVAGPVGAGKTALIEKLTREIASKYSVAVITNDIYTQEDAEFLTKNSLLPPERIMGVETGGCPHTAIREDASMNLEAVDEMVTRFPDVEIVFIESGGDNLSATFSPDLADVTIFVIDVAQGEKIPRKGGPGITRSDLLVINKTDLAPFVGADLSVMERDARRMRNGQPFIFTNLMKKENLDGVIGWIEKYALLKNVEEPASLVR</sequence>
<dbReference type="EMBL" id="L42023">
    <property type="protein sequence ID" value="AAC22194.1"/>
    <property type="molecule type" value="Genomic_DNA"/>
</dbReference>
<dbReference type="PIR" id="E64075">
    <property type="entry name" value="E64075"/>
</dbReference>
<dbReference type="RefSeq" id="NP_438694.1">
    <property type="nucleotide sequence ID" value="NC_000907.1"/>
</dbReference>
<dbReference type="SMR" id="P44396"/>
<dbReference type="STRING" id="71421.HI_0536"/>
<dbReference type="EnsemblBacteria" id="AAC22194">
    <property type="protein sequence ID" value="AAC22194"/>
    <property type="gene ID" value="HI_0536"/>
</dbReference>
<dbReference type="KEGG" id="hin:HI_0536"/>
<dbReference type="PATRIC" id="fig|71421.8.peg.555"/>
<dbReference type="eggNOG" id="COG0378">
    <property type="taxonomic scope" value="Bacteria"/>
</dbReference>
<dbReference type="HOGENOM" id="CLU_072144_1_0_6"/>
<dbReference type="OrthoDB" id="9802035at2"/>
<dbReference type="PhylomeDB" id="P44396"/>
<dbReference type="BioCyc" id="HINF71421:G1GJ1-549-MONOMER"/>
<dbReference type="Proteomes" id="UP000000579">
    <property type="component" value="Chromosome"/>
</dbReference>
<dbReference type="GO" id="GO:0005737">
    <property type="term" value="C:cytoplasm"/>
    <property type="evidence" value="ECO:0007669"/>
    <property type="project" value="UniProtKB-SubCell"/>
</dbReference>
<dbReference type="GO" id="GO:0005525">
    <property type="term" value="F:GTP binding"/>
    <property type="evidence" value="ECO:0007669"/>
    <property type="project" value="UniProtKB-KW"/>
</dbReference>
<dbReference type="GO" id="GO:0003924">
    <property type="term" value="F:GTPase activity"/>
    <property type="evidence" value="ECO:0007669"/>
    <property type="project" value="InterPro"/>
</dbReference>
<dbReference type="GO" id="GO:0016151">
    <property type="term" value="F:nickel cation binding"/>
    <property type="evidence" value="ECO:0007669"/>
    <property type="project" value="UniProtKB-UniRule"/>
</dbReference>
<dbReference type="GO" id="GO:0043419">
    <property type="term" value="P:urea catabolic process"/>
    <property type="evidence" value="ECO:0007669"/>
    <property type="project" value="InterPro"/>
</dbReference>
<dbReference type="CDD" id="cd05540">
    <property type="entry name" value="UreG"/>
    <property type="match status" value="1"/>
</dbReference>
<dbReference type="FunFam" id="3.40.50.300:FF:000208">
    <property type="entry name" value="Urease accessory protein UreG"/>
    <property type="match status" value="1"/>
</dbReference>
<dbReference type="Gene3D" id="3.40.50.300">
    <property type="entry name" value="P-loop containing nucleotide triphosphate hydrolases"/>
    <property type="match status" value="1"/>
</dbReference>
<dbReference type="HAMAP" id="MF_01389">
    <property type="entry name" value="UreG"/>
    <property type="match status" value="1"/>
</dbReference>
<dbReference type="InterPro" id="IPR003495">
    <property type="entry name" value="CobW/HypB/UreG_nucleotide-bd"/>
</dbReference>
<dbReference type="InterPro" id="IPR027417">
    <property type="entry name" value="P-loop_NTPase"/>
</dbReference>
<dbReference type="InterPro" id="IPR004400">
    <property type="entry name" value="UreG"/>
</dbReference>
<dbReference type="NCBIfam" id="TIGR00101">
    <property type="entry name" value="ureG"/>
    <property type="match status" value="1"/>
</dbReference>
<dbReference type="PANTHER" id="PTHR31715">
    <property type="entry name" value="UREASE ACCESSORY PROTEIN G"/>
    <property type="match status" value="1"/>
</dbReference>
<dbReference type="PANTHER" id="PTHR31715:SF0">
    <property type="entry name" value="UREASE ACCESSORY PROTEIN G"/>
    <property type="match status" value="1"/>
</dbReference>
<dbReference type="Pfam" id="PF02492">
    <property type="entry name" value="cobW"/>
    <property type="match status" value="1"/>
</dbReference>
<dbReference type="PIRSF" id="PIRSF005624">
    <property type="entry name" value="Ni-bind_GTPase"/>
    <property type="match status" value="1"/>
</dbReference>
<dbReference type="SUPFAM" id="SSF52540">
    <property type="entry name" value="P-loop containing nucleoside triphosphate hydrolases"/>
    <property type="match status" value="1"/>
</dbReference>
<reference key="1">
    <citation type="journal article" date="1995" name="Science">
        <title>Whole-genome random sequencing and assembly of Haemophilus influenzae Rd.</title>
        <authorList>
            <person name="Fleischmann R.D."/>
            <person name="Adams M.D."/>
            <person name="White O."/>
            <person name="Clayton R.A."/>
            <person name="Kirkness E.F."/>
            <person name="Kerlavage A.R."/>
            <person name="Bult C.J."/>
            <person name="Tomb J.-F."/>
            <person name="Dougherty B.A."/>
            <person name="Merrick J.M."/>
            <person name="McKenney K."/>
            <person name="Sutton G.G."/>
            <person name="FitzHugh W."/>
            <person name="Fields C.A."/>
            <person name="Gocayne J.D."/>
            <person name="Scott J.D."/>
            <person name="Shirley R."/>
            <person name="Liu L.-I."/>
            <person name="Glodek A."/>
            <person name="Kelley J.M."/>
            <person name="Weidman J.F."/>
            <person name="Phillips C.A."/>
            <person name="Spriggs T."/>
            <person name="Hedblom E."/>
            <person name="Cotton M.D."/>
            <person name="Utterback T.R."/>
            <person name="Hanna M.C."/>
            <person name="Nguyen D.T."/>
            <person name="Saudek D.M."/>
            <person name="Brandon R.C."/>
            <person name="Fine L.D."/>
            <person name="Fritchman J.L."/>
            <person name="Fuhrmann J.L."/>
            <person name="Geoghagen N.S.M."/>
            <person name="Gnehm C.L."/>
            <person name="McDonald L.A."/>
            <person name="Small K.V."/>
            <person name="Fraser C.M."/>
            <person name="Smith H.O."/>
            <person name="Venter J.C."/>
        </authorList>
    </citation>
    <scope>NUCLEOTIDE SEQUENCE [LARGE SCALE GENOMIC DNA]</scope>
    <source>
        <strain>ATCC 51907 / DSM 11121 / KW20 / Rd</strain>
    </source>
</reference>
<gene>
    <name evidence="1" type="primary">ureG</name>
    <name type="ordered locus">HI_0536</name>
</gene>
<keyword id="KW-0143">Chaperone</keyword>
<keyword id="KW-0963">Cytoplasm</keyword>
<keyword id="KW-0342">GTP-binding</keyword>
<keyword id="KW-0996">Nickel insertion</keyword>
<keyword id="KW-0547">Nucleotide-binding</keyword>
<keyword id="KW-1185">Reference proteome</keyword>
<evidence type="ECO:0000255" key="1">
    <source>
        <dbReference type="HAMAP-Rule" id="MF_01389"/>
    </source>
</evidence>
<feature type="chain" id="PRO_0000067665" description="Urease accessory protein UreG">
    <location>
        <begin position="1"/>
        <end position="225"/>
    </location>
</feature>
<feature type="binding site" evidence="1">
    <location>
        <begin position="25"/>
        <end position="32"/>
    </location>
    <ligand>
        <name>GTP</name>
        <dbReference type="ChEBI" id="CHEBI:37565"/>
    </ligand>
</feature>
<accession>P44396</accession>
<organism>
    <name type="scientific">Haemophilus influenzae (strain ATCC 51907 / DSM 11121 / KW20 / Rd)</name>
    <dbReference type="NCBI Taxonomy" id="71421"/>
    <lineage>
        <taxon>Bacteria</taxon>
        <taxon>Pseudomonadati</taxon>
        <taxon>Pseudomonadota</taxon>
        <taxon>Gammaproteobacteria</taxon>
        <taxon>Pasteurellales</taxon>
        <taxon>Pasteurellaceae</taxon>
        <taxon>Haemophilus</taxon>
    </lineage>
</organism>
<protein>
    <recommendedName>
        <fullName evidence="1">Urease accessory protein UreG</fullName>
    </recommendedName>
</protein>